<accession>A5GP60</accession>
<name>TRPB_SYNPW</name>
<evidence type="ECO:0000255" key="1">
    <source>
        <dbReference type="HAMAP-Rule" id="MF_00133"/>
    </source>
</evidence>
<reference key="1">
    <citation type="submission" date="2006-05" db="EMBL/GenBank/DDBJ databases">
        <authorList>
            <consortium name="Genoscope"/>
        </authorList>
    </citation>
    <scope>NUCLEOTIDE SEQUENCE [LARGE SCALE GENOMIC DNA]</scope>
    <source>
        <strain>WH7803</strain>
    </source>
</reference>
<gene>
    <name evidence="1" type="primary">trpB</name>
    <name type="ordered locus">SynWH7803_2299</name>
</gene>
<protein>
    <recommendedName>
        <fullName evidence="1">Tryptophan synthase beta chain</fullName>
        <ecNumber evidence="1">4.2.1.20</ecNumber>
    </recommendedName>
</protein>
<organism>
    <name type="scientific">Synechococcus sp. (strain WH7803)</name>
    <dbReference type="NCBI Taxonomy" id="32051"/>
    <lineage>
        <taxon>Bacteria</taxon>
        <taxon>Bacillati</taxon>
        <taxon>Cyanobacteriota</taxon>
        <taxon>Cyanophyceae</taxon>
        <taxon>Synechococcales</taxon>
        <taxon>Synechococcaceae</taxon>
        <taxon>Synechococcus</taxon>
    </lineage>
</organism>
<comment type="function">
    <text evidence="1">The beta subunit is responsible for the synthesis of L-tryptophan from indole and L-serine.</text>
</comment>
<comment type="catalytic activity">
    <reaction evidence="1">
        <text>(1S,2R)-1-C-(indol-3-yl)glycerol 3-phosphate + L-serine = D-glyceraldehyde 3-phosphate + L-tryptophan + H2O</text>
        <dbReference type="Rhea" id="RHEA:10532"/>
        <dbReference type="ChEBI" id="CHEBI:15377"/>
        <dbReference type="ChEBI" id="CHEBI:33384"/>
        <dbReference type="ChEBI" id="CHEBI:57912"/>
        <dbReference type="ChEBI" id="CHEBI:58866"/>
        <dbReference type="ChEBI" id="CHEBI:59776"/>
        <dbReference type="EC" id="4.2.1.20"/>
    </reaction>
</comment>
<comment type="cofactor">
    <cofactor evidence="1">
        <name>pyridoxal 5'-phosphate</name>
        <dbReference type="ChEBI" id="CHEBI:597326"/>
    </cofactor>
</comment>
<comment type="pathway">
    <text evidence="1">Amino-acid biosynthesis; L-tryptophan biosynthesis; L-tryptophan from chorismate: step 5/5.</text>
</comment>
<comment type="subunit">
    <text evidence="1">Tetramer of two alpha and two beta chains.</text>
</comment>
<comment type="similarity">
    <text evidence="1">Belongs to the TrpB family.</text>
</comment>
<sequence>MTSTLPSQPSASDLAVSSRPAAAGRFGRYGGQYVPETLMPALAELEQAAAQAWKDPAFTAELNRLLKSYVGRATPLYEAERLTEHYRRADGGPRIWLKREDLNHTGAHKINNALGQALLALRMGKKRVIAETGAGQHGVATATVCARFGLECVVYMGAEDMRRQALNVFRMRLLGATVHPVTAGTATLKDATSEAIRDWVTNVETTHYILGSVAGPHPYPMLVRDFHAVIGQETRQQCREAFGRLPDVLMACVGGGSNAMGLFHPFVECTDVRLIGVEAAGDGVATGRHAATITEGRVGVLHGAMSLLLQDQDGQVQEAHSISAGLDYPGVGPEHSYLREIGRAEYGAVTDAEALEALQLVSRLEGIIPALETAHAFAWLETLCPTLSAGTEVVLNCSGRGDKDVNTVAERLGDAL</sequence>
<proteinExistence type="inferred from homology"/>
<feature type="chain" id="PRO_1000018413" description="Tryptophan synthase beta chain">
    <location>
        <begin position="1"/>
        <end position="416"/>
    </location>
</feature>
<feature type="modified residue" description="N6-(pyridoxal phosphate)lysine" evidence="1">
    <location>
        <position position="109"/>
    </location>
</feature>
<keyword id="KW-0028">Amino-acid biosynthesis</keyword>
<keyword id="KW-0057">Aromatic amino acid biosynthesis</keyword>
<keyword id="KW-0456">Lyase</keyword>
<keyword id="KW-0663">Pyridoxal phosphate</keyword>
<keyword id="KW-1185">Reference proteome</keyword>
<keyword id="KW-0822">Tryptophan biosynthesis</keyword>
<dbReference type="EC" id="4.2.1.20" evidence="1"/>
<dbReference type="EMBL" id="CT971583">
    <property type="protein sequence ID" value="CAK24725.1"/>
    <property type="molecule type" value="Genomic_DNA"/>
</dbReference>
<dbReference type="SMR" id="A5GP60"/>
<dbReference type="STRING" id="32051.SynWH7803_2299"/>
<dbReference type="KEGG" id="syx:SynWH7803_2299"/>
<dbReference type="eggNOG" id="COG0133">
    <property type="taxonomic scope" value="Bacteria"/>
</dbReference>
<dbReference type="HOGENOM" id="CLU_016734_3_1_3"/>
<dbReference type="OrthoDB" id="9766131at2"/>
<dbReference type="UniPathway" id="UPA00035">
    <property type="reaction ID" value="UER00044"/>
</dbReference>
<dbReference type="Proteomes" id="UP000001566">
    <property type="component" value="Chromosome"/>
</dbReference>
<dbReference type="GO" id="GO:0005737">
    <property type="term" value="C:cytoplasm"/>
    <property type="evidence" value="ECO:0007669"/>
    <property type="project" value="TreeGrafter"/>
</dbReference>
<dbReference type="GO" id="GO:0004834">
    <property type="term" value="F:tryptophan synthase activity"/>
    <property type="evidence" value="ECO:0007669"/>
    <property type="project" value="UniProtKB-UniRule"/>
</dbReference>
<dbReference type="CDD" id="cd06446">
    <property type="entry name" value="Trp-synth_B"/>
    <property type="match status" value="1"/>
</dbReference>
<dbReference type="FunFam" id="3.40.50.1100:FF:000001">
    <property type="entry name" value="Tryptophan synthase beta chain"/>
    <property type="match status" value="1"/>
</dbReference>
<dbReference type="FunFam" id="3.40.50.1100:FF:000004">
    <property type="entry name" value="Tryptophan synthase beta chain"/>
    <property type="match status" value="1"/>
</dbReference>
<dbReference type="Gene3D" id="3.40.50.1100">
    <property type="match status" value="2"/>
</dbReference>
<dbReference type="HAMAP" id="MF_00133">
    <property type="entry name" value="Trp_synth_beta"/>
    <property type="match status" value="1"/>
</dbReference>
<dbReference type="InterPro" id="IPR006653">
    <property type="entry name" value="Trp_synth_b_CS"/>
</dbReference>
<dbReference type="InterPro" id="IPR006654">
    <property type="entry name" value="Trp_synth_beta"/>
</dbReference>
<dbReference type="InterPro" id="IPR023026">
    <property type="entry name" value="Trp_synth_beta/beta-like"/>
</dbReference>
<dbReference type="InterPro" id="IPR001926">
    <property type="entry name" value="TrpB-like_PALP"/>
</dbReference>
<dbReference type="InterPro" id="IPR036052">
    <property type="entry name" value="TrpB-like_PALP_sf"/>
</dbReference>
<dbReference type="NCBIfam" id="TIGR00263">
    <property type="entry name" value="trpB"/>
    <property type="match status" value="1"/>
</dbReference>
<dbReference type="PANTHER" id="PTHR48077:SF3">
    <property type="entry name" value="TRYPTOPHAN SYNTHASE"/>
    <property type="match status" value="1"/>
</dbReference>
<dbReference type="PANTHER" id="PTHR48077">
    <property type="entry name" value="TRYPTOPHAN SYNTHASE-RELATED"/>
    <property type="match status" value="1"/>
</dbReference>
<dbReference type="Pfam" id="PF00291">
    <property type="entry name" value="PALP"/>
    <property type="match status" value="1"/>
</dbReference>
<dbReference type="PIRSF" id="PIRSF001413">
    <property type="entry name" value="Trp_syn_beta"/>
    <property type="match status" value="1"/>
</dbReference>
<dbReference type="SUPFAM" id="SSF53686">
    <property type="entry name" value="Tryptophan synthase beta subunit-like PLP-dependent enzymes"/>
    <property type="match status" value="1"/>
</dbReference>
<dbReference type="PROSITE" id="PS00168">
    <property type="entry name" value="TRP_SYNTHASE_BETA"/>
    <property type="match status" value="1"/>
</dbReference>